<organism>
    <name type="scientific">Escherichia coli O45:K1 (strain S88 / ExPEC)</name>
    <dbReference type="NCBI Taxonomy" id="585035"/>
    <lineage>
        <taxon>Bacteria</taxon>
        <taxon>Pseudomonadati</taxon>
        <taxon>Pseudomonadota</taxon>
        <taxon>Gammaproteobacteria</taxon>
        <taxon>Enterobacterales</taxon>
        <taxon>Enterobacteriaceae</taxon>
        <taxon>Escherichia</taxon>
    </lineage>
</organism>
<evidence type="ECO:0000255" key="1">
    <source>
        <dbReference type="HAMAP-Rule" id="MF_02010"/>
    </source>
</evidence>
<comment type="function">
    <text evidence="1">Inhibits RpoS proteolysis by regulating RssB activity, thereby increasing the stability of the sigma stress factor RpoS during oxidative stress. Its effect on RpoS stability is due to its interaction with RssB, which probably blocks the interaction of RssB with RpoS, and the consequent delivery of the RssB-RpoS complex to the ClpXP protein degradation pathway.</text>
</comment>
<comment type="subunit">
    <text evidence="1">Interacts with RssB.</text>
</comment>
<comment type="subcellular location">
    <subcellularLocation>
        <location evidence="1">Cytoplasm</location>
    </subcellularLocation>
</comment>
<comment type="similarity">
    <text evidence="1">Belongs to the GpW/Gp25 family. IraD subfamily.</text>
</comment>
<feature type="chain" id="PRO_1000189478" description="Anti-adapter protein IraD">
    <location>
        <begin position="1"/>
        <end position="130"/>
    </location>
</feature>
<sequence length="130" mass="14819">MMRQSRQAVLPEISGNKTSSLRKSICSDLLTLFNSPHSALPSLLVSGMPEWQVHNQSDKHLQSWYCRQLRSALLFHEPRIAALQVNLKEAYSHTLAISLEIMLYHDDEPLTFDLVWDNGGWRSATLENVS</sequence>
<accession>B7MML7</accession>
<reference key="1">
    <citation type="journal article" date="2009" name="PLoS Genet.">
        <title>Organised genome dynamics in the Escherichia coli species results in highly diverse adaptive paths.</title>
        <authorList>
            <person name="Touchon M."/>
            <person name="Hoede C."/>
            <person name="Tenaillon O."/>
            <person name="Barbe V."/>
            <person name="Baeriswyl S."/>
            <person name="Bidet P."/>
            <person name="Bingen E."/>
            <person name="Bonacorsi S."/>
            <person name="Bouchier C."/>
            <person name="Bouvet O."/>
            <person name="Calteau A."/>
            <person name="Chiapello H."/>
            <person name="Clermont O."/>
            <person name="Cruveiller S."/>
            <person name="Danchin A."/>
            <person name="Diard M."/>
            <person name="Dossat C."/>
            <person name="Karoui M.E."/>
            <person name="Frapy E."/>
            <person name="Garry L."/>
            <person name="Ghigo J.M."/>
            <person name="Gilles A.M."/>
            <person name="Johnson J."/>
            <person name="Le Bouguenec C."/>
            <person name="Lescat M."/>
            <person name="Mangenot S."/>
            <person name="Martinez-Jehanne V."/>
            <person name="Matic I."/>
            <person name="Nassif X."/>
            <person name="Oztas S."/>
            <person name="Petit M.A."/>
            <person name="Pichon C."/>
            <person name="Rouy Z."/>
            <person name="Ruf C.S."/>
            <person name="Schneider D."/>
            <person name="Tourret J."/>
            <person name="Vacherie B."/>
            <person name="Vallenet D."/>
            <person name="Medigue C."/>
            <person name="Rocha E.P.C."/>
            <person name="Denamur E."/>
        </authorList>
    </citation>
    <scope>NUCLEOTIDE SEQUENCE [LARGE SCALE GENOMIC DNA]</scope>
    <source>
        <strain>S88 / ExPEC</strain>
    </source>
</reference>
<name>IRAD_ECO45</name>
<keyword id="KW-0963">Cytoplasm</keyword>
<keyword id="KW-1185">Reference proteome</keyword>
<keyword id="KW-0346">Stress response</keyword>
<gene>
    <name evidence="1" type="primary">iraD</name>
    <name type="ordered locus">ECS88_4945</name>
</gene>
<proteinExistence type="inferred from homology"/>
<protein>
    <recommendedName>
        <fullName evidence="1">Anti-adapter protein IraD</fullName>
    </recommendedName>
</protein>
<dbReference type="EMBL" id="CU928161">
    <property type="protein sequence ID" value="CAR06089.1"/>
    <property type="molecule type" value="Genomic_DNA"/>
</dbReference>
<dbReference type="RefSeq" id="WP_001297236.1">
    <property type="nucleotide sequence ID" value="NC_011742.1"/>
</dbReference>
<dbReference type="SMR" id="B7MML7"/>
<dbReference type="KEGG" id="ecz:ECS88_4945"/>
<dbReference type="HOGENOM" id="CLU_1977621_0_0_6"/>
<dbReference type="Proteomes" id="UP000000747">
    <property type="component" value="Chromosome"/>
</dbReference>
<dbReference type="GO" id="GO:0005737">
    <property type="term" value="C:cytoplasm"/>
    <property type="evidence" value="ECO:0007669"/>
    <property type="project" value="UniProtKB-SubCell"/>
</dbReference>
<dbReference type="GO" id="GO:0043856">
    <property type="term" value="F:anti-sigma factor antagonist activity"/>
    <property type="evidence" value="ECO:0007669"/>
    <property type="project" value="InterPro"/>
</dbReference>
<dbReference type="GO" id="GO:0034599">
    <property type="term" value="P:cellular response to oxidative stress"/>
    <property type="evidence" value="ECO:0007669"/>
    <property type="project" value="UniProtKB-UniRule"/>
</dbReference>
<dbReference type="GO" id="GO:0006974">
    <property type="term" value="P:DNA damage response"/>
    <property type="evidence" value="ECO:0007669"/>
    <property type="project" value="InterPro"/>
</dbReference>
<dbReference type="HAMAP" id="MF_02010">
    <property type="entry name" value="IraD"/>
    <property type="match status" value="1"/>
</dbReference>
<dbReference type="InterPro" id="IPR023776">
    <property type="entry name" value="Anti-adapt_IraD"/>
</dbReference>
<dbReference type="InterPro" id="IPR007048">
    <property type="entry name" value="IraD/Gp25-like"/>
</dbReference>
<dbReference type="NCBIfam" id="NF010726">
    <property type="entry name" value="PRK14128.1-1"/>
    <property type="match status" value="1"/>
</dbReference>
<dbReference type="NCBIfam" id="NF010728">
    <property type="entry name" value="PRK14128.1-3"/>
    <property type="match status" value="1"/>
</dbReference>
<dbReference type="Pfam" id="PF04965">
    <property type="entry name" value="GPW_gp25"/>
    <property type="match status" value="1"/>
</dbReference>
<dbReference type="SUPFAM" id="SSF160719">
    <property type="entry name" value="gpW/gp25-like"/>
    <property type="match status" value="1"/>
</dbReference>